<feature type="signal peptide" evidence="10">
    <location>
        <begin position="1"/>
        <end position="23"/>
    </location>
</feature>
<feature type="chain" id="PRO_0000010914" description="Interleukin-11 receptor subunit alpha-1">
    <location>
        <begin position="24"/>
        <end position="432"/>
    </location>
</feature>
<feature type="chain" id="PRO_0000450689" description="Soluble interleukin-11 receptor subunit alpha">
    <location>
        <begin position="24"/>
        <end status="unknown"/>
    </location>
</feature>
<feature type="topological domain" description="Extracellular" evidence="2">
    <location>
        <begin position="24"/>
        <end position="372"/>
    </location>
</feature>
<feature type="transmembrane region" description="Helical" evidence="2">
    <location>
        <begin position="373"/>
        <end position="393"/>
    </location>
</feature>
<feature type="topological domain" description="Cytoplasmic" evidence="2">
    <location>
        <begin position="394"/>
        <end position="432"/>
    </location>
</feature>
<feature type="domain" description="Ig-like C2-type">
    <location>
        <begin position="27"/>
        <end position="110"/>
    </location>
</feature>
<feature type="domain" description="Fibronectin type-III 1" evidence="4">
    <location>
        <begin position="112"/>
        <end position="219"/>
    </location>
</feature>
<feature type="domain" description="Fibronectin type-III 2" evidence="4">
    <location>
        <begin position="220"/>
        <end position="317"/>
    </location>
</feature>
<feature type="region of interest" description="Disordered" evidence="5">
    <location>
        <begin position="151"/>
        <end position="170"/>
    </location>
</feature>
<feature type="region of interest" description="Disordered" evidence="5">
    <location>
        <begin position="309"/>
        <end position="332"/>
    </location>
</feature>
<feature type="region of interest" description="Disordered" evidence="5">
    <location>
        <begin position="342"/>
        <end position="361"/>
    </location>
</feature>
<feature type="short sequence motif" description="WSXWS motif">
    <location>
        <begin position="304"/>
        <end position="308"/>
    </location>
</feature>
<feature type="glycosylation site" description="N-linked (GlcNAc...) asparagine" evidence="2">
    <location>
        <position position="127"/>
    </location>
</feature>
<feature type="glycosylation site" description="N-linked (GlcNAc...) asparagine" evidence="2">
    <location>
        <position position="194"/>
    </location>
</feature>
<feature type="disulfide bond" evidence="3">
    <location>
        <begin position="48"/>
        <end position="94"/>
    </location>
</feature>
<feature type="disulfide bond" evidence="3">
    <location>
        <begin position="120"/>
        <end position="130"/>
    </location>
</feature>
<feature type="disulfide bond" evidence="3">
    <location>
        <begin position="170"/>
        <end position="180"/>
    </location>
</feature>
<feature type="sequence conflict" description="In Ref. 6; AAH57664/AAH69984." evidence="12" ref="6">
    <original>V</original>
    <variation>I</variation>
    <location>
        <position position="93"/>
    </location>
</feature>
<feature type="sequence conflict" description="In Ref. 6; AAH57664/AAH69984." evidence="12" ref="6">
    <original>G</original>
    <variation>R</variation>
    <location>
        <position position="332"/>
    </location>
</feature>
<feature type="sequence conflict" description="In Ref. 6; AAH57664/AAH69984." evidence="12" ref="6">
    <original>V</original>
    <variation>I</variation>
    <location>
        <position position="368"/>
    </location>
</feature>
<gene>
    <name evidence="13" type="primary">Il11ra1</name>
    <name type="synonym">Etl2</name>
    <name type="synonym">Il11ra</name>
</gene>
<protein>
    <recommendedName>
        <fullName evidence="12">Interleukin-11 receptor subunit alpha-1</fullName>
        <shortName>IL-11 receptor subunit alpha-1</shortName>
        <shortName>IL-11R subunit alpha-1</shortName>
        <shortName>IL-11R-alpha-1</shortName>
        <shortName>IL-11RA1</shortName>
    </recommendedName>
    <alternativeName>
        <fullName>Enhancer trap locus homolog 2</fullName>
        <shortName>Etl-2</shortName>
    </alternativeName>
    <alternativeName>
        <fullName>Novel cytokine receptor 1</fullName>
        <shortName>NR-1</shortName>
        <shortName>NR1</shortName>
    </alternativeName>
    <component>
        <recommendedName>
            <fullName evidence="12">Soluble interleukin-11 receptor subunit alpha</fullName>
            <shortName evidence="11">sIL-11R</shortName>
            <shortName>sIL-11RA</shortName>
            <shortName evidence="12">sIL11RA</shortName>
        </recommendedName>
    </component>
</protein>
<comment type="function">
    <text>Receptor for interleukin-11. The receptor systems for IL6, LIF, OSM, CNTF, IL11 and CT1 can utilize IL6ST for initiating signal transmission. The IL11/IL11RA/IL6ST complex may be involved in the control of proliferation and/or differentiation of skeletogenic progenitor or other mesenchymal cells. Essential for the normal development of craniofacial bones and teeth.</text>
</comment>
<comment type="function">
    <molecule>Soluble interleukin-11 receptor subunit alpha</molecule>
    <text evidence="1">Soluble form of IL11 receptor (sIL11RA) that acts as an agonist of IL11 activity. The IL11:sIL11RA complex binds to IL6ST/gp130 on cell surfaces and induces signaling also on cells that do not express membrane-bound IL11RA in a process called IL11 trans-signaling.</text>
</comment>
<comment type="subunit">
    <text evidence="1">On IL11 binding, forms a multimer complex with IL6ST/gp130.</text>
</comment>
<comment type="subcellular location">
    <molecule>Interleukin-11 receptor subunit alpha-1</molecule>
    <subcellularLocation>
        <location evidence="7">Membrane</location>
        <topology evidence="2">Single-pass type I membrane protein</topology>
    </subcellularLocation>
    <subcellularLocation>
        <location evidence="1">Secreted</location>
    </subcellularLocation>
</comment>
<comment type="subcellular location">
    <molecule>Soluble interleukin-11 receptor subunit alpha</molecule>
    <subcellularLocation>
        <location evidence="7">Secreted</location>
    </subcellularLocation>
</comment>
<comment type="tissue specificity">
    <text evidence="9">Widely expressed in all adult tissues and in embryos. Highest levels in kidney, skeletal muscle and embryo.</text>
</comment>
<comment type="developmental stage">
    <text evidence="8">First detected at low levels at 10.5 dpc in cranofacial mesenchyme and in parts of the nervous system. At 12.5 dpc, high expression found in heart, diaphragm, bronchi and in the mesenchyme surrounding precartilage condensations. At later stages, expressed in dental papilla, dermis, hair follicles and in the perichondrium and in regions containing chondro and osteo progenitor cells.</text>
</comment>
<comment type="PTM">
    <text evidence="7">A short soluble form is also released from the membrane by proteolysis (PubMed:26876177). The sIL11RA is formed either by limited proteolysis of membrane-bound receptors, a process referred to as ectodomain shedding, or directly secreted from the cells after alternative mRNA splicing (PubMed:26876177). mIL11RA is cleaved by the proteases ADAM10, ELANE and PRTN3 (PubMed:26876177).</text>
</comment>
<comment type="disruption phenotype">
    <text evidence="6">Mice have disturbed cranial growth and suture activity.</text>
</comment>
<comment type="similarity">
    <text evidence="12">Belongs to the type I cytokine receptor family. Type 3 subfamily.</text>
</comment>
<evidence type="ECO:0000250" key="1">
    <source>
        <dbReference type="UniProtKB" id="Q14626"/>
    </source>
</evidence>
<evidence type="ECO:0000255" key="2"/>
<evidence type="ECO:0000255" key="3">
    <source>
        <dbReference type="PROSITE-ProRule" id="PRU00114"/>
    </source>
</evidence>
<evidence type="ECO:0000255" key="4">
    <source>
        <dbReference type="PROSITE-ProRule" id="PRU00316"/>
    </source>
</evidence>
<evidence type="ECO:0000256" key="5">
    <source>
        <dbReference type="SAM" id="MobiDB-lite"/>
    </source>
</evidence>
<evidence type="ECO:0000269" key="6">
    <source>
    </source>
</evidence>
<evidence type="ECO:0000269" key="7">
    <source>
    </source>
</evidence>
<evidence type="ECO:0000269" key="8">
    <source>
    </source>
</evidence>
<evidence type="ECO:0000269" key="9">
    <source>
    </source>
</evidence>
<evidence type="ECO:0000269" key="10">
    <source>
    </source>
</evidence>
<evidence type="ECO:0000303" key="11">
    <source>
    </source>
</evidence>
<evidence type="ECO:0000305" key="12"/>
<evidence type="ECO:0000312" key="13">
    <source>
        <dbReference type="MGI" id="MGI:107426"/>
    </source>
</evidence>
<dbReference type="EMBL" id="X74953">
    <property type="protein sequence ID" value="CAA52908.1"/>
    <property type="molecule type" value="mRNA"/>
</dbReference>
<dbReference type="EMBL" id="U14412">
    <property type="protein sequence ID" value="AAA53248.1"/>
    <property type="molecule type" value="mRNA"/>
</dbReference>
<dbReference type="EMBL" id="X94162">
    <property type="protein sequence ID" value="CAA63873.1"/>
    <property type="molecule type" value="Genomic_DNA"/>
</dbReference>
<dbReference type="EMBL" id="X94163">
    <property type="protein sequence ID" value="CAA63873.1"/>
    <property type="status" value="JOINED"/>
    <property type="molecule type" value="Genomic_DNA"/>
</dbReference>
<dbReference type="EMBL" id="AL807796">
    <property type="status" value="NOT_ANNOTATED_CDS"/>
    <property type="molecule type" value="Genomic_DNA"/>
</dbReference>
<dbReference type="EMBL" id="BC004619">
    <property type="protein sequence ID" value="AAH04619.1"/>
    <property type="molecule type" value="mRNA"/>
</dbReference>
<dbReference type="EMBL" id="BC057664">
    <property type="protein sequence ID" value="AAH57664.1"/>
    <property type="molecule type" value="mRNA"/>
</dbReference>
<dbReference type="EMBL" id="BC069984">
    <property type="protein sequence ID" value="AAH69984.1"/>
    <property type="molecule type" value="mRNA"/>
</dbReference>
<dbReference type="CCDS" id="CCDS18071.1"/>
<dbReference type="PIR" id="I48343">
    <property type="entry name" value="I48343"/>
</dbReference>
<dbReference type="RefSeq" id="NP_001156873.1">
    <property type="nucleotide sequence ID" value="NM_001163401.1"/>
</dbReference>
<dbReference type="RefSeq" id="NP_001165525.1">
    <property type="nucleotide sequence ID" value="NM_001172054.1"/>
</dbReference>
<dbReference type="RefSeq" id="NP_034679.1">
    <property type="nucleotide sequence ID" value="NM_010549.3"/>
</dbReference>
<dbReference type="SMR" id="Q64385"/>
<dbReference type="DIP" id="DIP-5781N"/>
<dbReference type="FunCoup" id="Q64385">
    <property type="interactions" value="417"/>
</dbReference>
<dbReference type="IntAct" id="Q64385">
    <property type="interactions" value="2"/>
</dbReference>
<dbReference type="STRING" id="10090.ENSMUSP00000095736"/>
<dbReference type="GlyCosmos" id="Q64385">
    <property type="glycosylation" value="2 sites, No reported glycans"/>
</dbReference>
<dbReference type="GlyGen" id="Q64385">
    <property type="glycosylation" value="2 sites"/>
</dbReference>
<dbReference type="PhosphoSitePlus" id="Q64385"/>
<dbReference type="PaxDb" id="10090-ENSMUSP00000095736"/>
<dbReference type="ProteomicsDB" id="273334"/>
<dbReference type="DNASU" id="16157"/>
<dbReference type="Ensembl" id="ENSMUST00000098132.11">
    <property type="protein sequence ID" value="ENSMUSP00000095736.5"/>
    <property type="gene ID" value="ENSMUSG00000073889.11"/>
</dbReference>
<dbReference type="Ensembl" id="ENSMUST00000108040.8">
    <property type="protein sequence ID" value="ENSMUSP00000103675.2"/>
    <property type="gene ID" value="ENSMUSG00000073889.11"/>
</dbReference>
<dbReference type="Ensembl" id="ENSMUST00000108041.8">
    <property type="protein sequence ID" value="ENSMUSP00000103676.2"/>
    <property type="gene ID" value="ENSMUSG00000073889.11"/>
</dbReference>
<dbReference type="Ensembl" id="ENSMUST00000108042.3">
    <property type="protein sequence ID" value="ENSMUSP00000103677.3"/>
    <property type="gene ID" value="ENSMUSG00000073889.11"/>
</dbReference>
<dbReference type="GeneID" id="16157"/>
<dbReference type="KEGG" id="mmu:16157"/>
<dbReference type="UCSC" id="uc008sjr.2">
    <property type="organism name" value="mouse"/>
</dbReference>
<dbReference type="AGR" id="MGI:107426"/>
<dbReference type="CTD" id="16157"/>
<dbReference type="MGI" id="MGI:107426">
    <property type="gene designation" value="Il11ra1"/>
</dbReference>
<dbReference type="VEuPathDB" id="HostDB:ENSMUSG00000073889"/>
<dbReference type="eggNOG" id="ENOG502R7G6">
    <property type="taxonomic scope" value="Eukaryota"/>
</dbReference>
<dbReference type="GeneTree" id="ENSGT00940000160904"/>
<dbReference type="HOGENOM" id="CLU_047259_0_1_1"/>
<dbReference type="InParanoid" id="Q64385"/>
<dbReference type="OMA" id="WNFPSSW"/>
<dbReference type="OrthoDB" id="418412at2759"/>
<dbReference type="PhylomeDB" id="Q64385"/>
<dbReference type="TreeFam" id="TF331210"/>
<dbReference type="Reactome" id="R-MMU-6788467">
    <property type="pathway name" value="IL-6-type cytokine receptor ligand interactions"/>
</dbReference>
<dbReference type="BioGRID-ORCS" id="16157">
    <property type="hits" value="3 hits in 45 CRISPR screens"/>
</dbReference>
<dbReference type="ChiTaRS" id="Il11ra1">
    <property type="organism name" value="mouse"/>
</dbReference>
<dbReference type="PRO" id="PR:Q64385"/>
<dbReference type="Proteomes" id="UP000000589">
    <property type="component" value="Chromosome 4"/>
</dbReference>
<dbReference type="RNAct" id="Q64385">
    <property type="molecule type" value="protein"/>
</dbReference>
<dbReference type="Bgee" id="ENSMUSG00000073889">
    <property type="expression patterns" value="Expressed in zone of skin and 75 other cell types or tissues"/>
</dbReference>
<dbReference type="GO" id="GO:0005576">
    <property type="term" value="C:extracellular region"/>
    <property type="evidence" value="ECO:0007669"/>
    <property type="project" value="UniProtKB-SubCell"/>
</dbReference>
<dbReference type="GO" id="GO:0016020">
    <property type="term" value="C:membrane"/>
    <property type="evidence" value="ECO:0007669"/>
    <property type="project" value="UniProtKB-SubCell"/>
</dbReference>
<dbReference type="GO" id="GO:0019970">
    <property type="term" value="F:interleukin-11 binding"/>
    <property type="evidence" value="ECO:0000353"/>
    <property type="project" value="MGI"/>
</dbReference>
<dbReference type="GO" id="GO:0004921">
    <property type="term" value="F:interleukin-11 receptor activity"/>
    <property type="evidence" value="ECO:0000314"/>
    <property type="project" value="MGI"/>
</dbReference>
<dbReference type="GO" id="GO:0008283">
    <property type="term" value="P:cell population proliferation"/>
    <property type="evidence" value="ECO:0000314"/>
    <property type="project" value="MGI"/>
</dbReference>
<dbReference type="GO" id="GO:0019221">
    <property type="term" value="P:cytokine-mediated signaling pathway"/>
    <property type="evidence" value="ECO:0000314"/>
    <property type="project" value="MGI"/>
</dbReference>
<dbReference type="GO" id="GO:0046697">
    <property type="term" value="P:decidualization"/>
    <property type="evidence" value="ECO:0000315"/>
    <property type="project" value="MGI"/>
</dbReference>
<dbReference type="GO" id="GO:0032502">
    <property type="term" value="P:developmental process"/>
    <property type="evidence" value="ECO:0000250"/>
    <property type="project" value="UniProtKB"/>
</dbReference>
<dbReference type="GO" id="GO:0060322">
    <property type="term" value="P:head development"/>
    <property type="evidence" value="ECO:0000250"/>
    <property type="project" value="UniProtKB"/>
</dbReference>
<dbReference type="GO" id="GO:0060135">
    <property type="term" value="P:maternal process involved in female pregnancy"/>
    <property type="evidence" value="ECO:0000315"/>
    <property type="project" value="MGI"/>
</dbReference>
<dbReference type="GO" id="GO:0001779">
    <property type="term" value="P:natural killer cell differentiation"/>
    <property type="evidence" value="ECO:0000315"/>
    <property type="project" value="MGI"/>
</dbReference>
<dbReference type="GO" id="GO:0001890">
    <property type="term" value="P:placenta development"/>
    <property type="evidence" value="ECO:0000315"/>
    <property type="project" value="MGI"/>
</dbReference>
<dbReference type="GO" id="GO:0008284">
    <property type="term" value="P:positive regulation of cell population proliferation"/>
    <property type="evidence" value="ECO:0000314"/>
    <property type="project" value="MGI"/>
</dbReference>
<dbReference type="CDD" id="cd00063">
    <property type="entry name" value="FN3"/>
    <property type="match status" value="1"/>
</dbReference>
<dbReference type="FunFam" id="2.60.40.10:FF:000136">
    <property type="entry name" value="Ciliary neurotrophic factor receptor alpha"/>
    <property type="match status" value="1"/>
</dbReference>
<dbReference type="FunFam" id="2.60.40.10:FF:000545">
    <property type="entry name" value="Interleukin-11 receptor subunit alpha"/>
    <property type="match status" value="1"/>
</dbReference>
<dbReference type="Gene3D" id="2.60.40.10">
    <property type="entry name" value="Immunoglobulins"/>
    <property type="match status" value="3"/>
</dbReference>
<dbReference type="InterPro" id="IPR003961">
    <property type="entry name" value="FN3_dom"/>
</dbReference>
<dbReference type="InterPro" id="IPR036116">
    <property type="entry name" value="FN3_sf"/>
</dbReference>
<dbReference type="InterPro" id="IPR003530">
    <property type="entry name" value="Hematopoietin_rcpt_L_F3_CS"/>
</dbReference>
<dbReference type="InterPro" id="IPR007110">
    <property type="entry name" value="Ig-like_dom"/>
</dbReference>
<dbReference type="InterPro" id="IPR036179">
    <property type="entry name" value="Ig-like_dom_sf"/>
</dbReference>
<dbReference type="InterPro" id="IPR013783">
    <property type="entry name" value="Ig-like_fold"/>
</dbReference>
<dbReference type="InterPro" id="IPR003599">
    <property type="entry name" value="Ig_sub"/>
</dbReference>
<dbReference type="InterPro" id="IPR053073">
    <property type="entry name" value="IL11/IL27_subunit_beta"/>
</dbReference>
<dbReference type="PANTHER" id="PTHR48483">
    <property type="entry name" value="INTERLEUKIN-27 SUBUNIT BETA"/>
    <property type="match status" value="1"/>
</dbReference>
<dbReference type="PANTHER" id="PTHR48483:SF2">
    <property type="entry name" value="INTERLEUKIN-27 SUBUNIT BETA"/>
    <property type="match status" value="1"/>
</dbReference>
<dbReference type="SMART" id="SM00060">
    <property type="entry name" value="FN3"/>
    <property type="match status" value="2"/>
</dbReference>
<dbReference type="SMART" id="SM00409">
    <property type="entry name" value="IG"/>
    <property type="match status" value="1"/>
</dbReference>
<dbReference type="SUPFAM" id="SSF49265">
    <property type="entry name" value="Fibronectin type III"/>
    <property type="match status" value="2"/>
</dbReference>
<dbReference type="SUPFAM" id="SSF48726">
    <property type="entry name" value="Immunoglobulin"/>
    <property type="match status" value="1"/>
</dbReference>
<dbReference type="PROSITE" id="PS50853">
    <property type="entry name" value="FN3"/>
    <property type="match status" value="2"/>
</dbReference>
<dbReference type="PROSITE" id="PS01354">
    <property type="entry name" value="HEMATOPO_REC_L_F3"/>
    <property type="match status" value="1"/>
</dbReference>
<dbReference type="PROSITE" id="PS50835">
    <property type="entry name" value="IG_LIKE"/>
    <property type="match status" value="1"/>
</dbReference>
<accession>Q64385</accession>
<accession>A2AMS4</accession>
<accession>Q6NSQ0</accession>
<keyword id="KW-0903">Direct protein sequencing</keyword>
<keyword id="KW-1015">Disulfide bond</keyword>
<keyword id="KW-0325">Glycoprotein</keyword>
<keyword id="KW-0393">Immunoglobulin domain</keyword>
<keyword id="KW-0472">Membrane</keyword>
<keyword id="KW-0675">Receptor</keyword>
<keyword id="KW-1185">Reference proteome</keyword>
<keyword id="KW-0677">Repeat</keyword>
<keyword id="KW-0964">Secreted</keyword>
<keyword id="KW-0732">Signal</keyword>
<keyword id="KW-0812">Transmembrane</keyword>
<keyword id="KW-1133">Transmembrane helix</keyword>
<sequence length="432" mass="46655">MSSSCSGLTRVLVAVATALVSSSSPCPQAWGPPGVQYGQPGRPVMLCCPGVSAGTPVSWFRDGDSRLLQGPDSGLGHRLVLAQVDSPDEGTYVCQTLDGVSGGMVTLKLGFPPARPEVSCQAVDYENFSCTWSPGQVSGLPTRYLTSYRKKTLPGAESQRESPSTGPWPCPQDPLEASRCVVHGAEFWSEYRINVTEVNPLGASTCLLDVRLQSILRPDPPQGLRVESVPGYPRRLHASWTYPASWRRQPHFLLKFRLQYRPAQHPAWSTVEPIGLEEVITDAVAGLPHAVRVSARDFLDAGTWSAWSPEAWGTPSTGPLQDEIPDWSQGHGQQLEAVVAQEDSPAPARPSLQPDPRPLDHRDPLEQVAVLASLGIFSCLGLAVGALALGLWLRLRRSGKDGPQKPGLLAPMIPVEKLPGIPNLQRTPENFS</sequence>
<organism>
    <name type="scientific">Mus musculus</name>
    <name type="common">Mouse</name>
    <dbReference type="NCBI Taxonomy" id="10090"/>
    <lineage>
        <taxon>Eukaryota</taxon>
        <taxon>Metazoa</taxon>
        <taxon>Chordata</taxon>
        <taxon>Craniata</taxon>
        <taxon>Vertebrata</taxon>
        <taxon>Euteleostomi</taxon>
        <taxon>Mammalia</taxon>
        <taxon>Eutheria</taxon>
        <taxon>Euarchontoglires</taxon>
        <taxon>Glires</taxon>
        <taxon>Rodentia</taxon>
        <taxon>Myomorpha</taxon>
        <taxon>Muroidea</taxon>
        <taxon>Muridae</taxon>
        <taxon>Murinae</taxon>
        <taxon>Mus</taxon>
        <taxon>Mus</taxon>
    </lineage>
</organism>
<name>I11RA_MOUSE</name>
<proteinExistence type="evidence at protein level"/>
<reference key="1">
    <citation type="journal article" date="1994" name="Dev. Biol.">
        <title>etl2, a novel putative type-1 cytokine receptor expressed during mouse embryogenesis at high levels in skin and cells with skeletogenic potential.</title>
        <authorList>
            <person name="Neuhaus H."/>
            <person name="Bettenhausen B."/>
            <person name="Bilinski P."/>
            <person name="Simon-Chazottes D."/>
            <person name="Guenet J.-L."/>
            <person name="Gossler A."/>
        </authorList>
    </citation>
    <scope>NUCLEOTIDE SEQUENCE [MRNA]</scope>
    <scope>DEVELOPMENTAL STAGE</scope>
    <source>
        <strain>BALB/cJ</strain>
    </source>
</reference>
<reference key="2">
    <citation type="journal article" date="1994" name="EMBO J.">
        <title>Cloning of a murine IL-11 receptor alpha-chain; requirement for gp130 for high affinity binding and signal transduction.</title>
        <authorList>
            <person name="Hilton D.J."/>
            <person name="Hilton A.A."/>
            <person name="Raicevic A."/>
            <person name="Rakar S."/>
            <person name="Harrison-Smith M."/>
            <person name="Gough N.M."/>
            <person name="Begley C.G."/>
            <person name="Metcalf D."/>
            <person name="Nicola N.A."/>
            <person name="Willson T.A."/>
        </authorList>
    </citation>
    <scope>NUCLEOTIDE SEQUENCE [MRNA]</scope>
    <source>
        <strain>C57BL/6 X CBA</strain>
        <tissue>Liver</tissue>
    </source>
</reference>
<reference key="3">
    <citation type="journal article" date="1996" name="Biochem. J.">
        <title>Two differentially expressed interleukin-11 receptor genes in the mouse genome.</title>
        <authorList>
            <person name="Bilinski P."/>
            <person name="Hall M.A."/>
            <person name="Neuhaus H."/>
            <person name="Gissel C."/>
            <person name="Heath J.K."/>
            <person name="Gossler A."/>
        </authorList>
    </citation>
    <scope>NUCLEOTIDE SEQUENCE [GENOMIC DNA]</scope>
    <source>
        <strain>129/Sv</strain>
    </source>
</reference>
<reference key="4">
    <citation type="journal article" date="1996" name="J. Biol. Chem.">
        <title>Structural analysis of the gene encoding the murine interleukin-11 receptor alpha-chain and a related locus.</title>
        <authorList>
            <person name="Robb L."/>
            <person name="Hilton D.J."/>
            <person name="Willson T.A."/>
            <person name="Begley C.G."/>
        </authorList>
    </citation>
    <scope>NUCLEOTIDE SEQUENCE [GENOMIC DNA]</scope>
    <scope>TISSUE SPECIFICITY</scope>
    <source>
        <strain>129/Sv</strain>
        <tissue>Testis</tissue>
    </source>
</reference>
<reference key="5">
    <citation type="journal article" date="2009" name="PLoS Biol.">
        <title>Lineage-specific biology revealed by a finished genome assembly of the mouse.</title>
        <authorList>
            <person name="Church D.M."/>
            <person name="Goodstadt L."/>
            <person name="Hillier L.W."/>
            <person name="Zody M.C."/>
            <person name="Goldstein S."/>
            <person name="She X."/>
            <person name="Bult C.J."/>
            <person name="Agarwala R."/>
            <person name="Cherry J.L."/>
            <person name="DiCuccio M."/>
            <person name="Hlavina W."/>
            <person name="Kapustin Y."/>
            <person name="Meric P."/>
            <person name="Maglott D."/>
            <person name="Birtle Z."/>
            <person name="Marques A.C."/>
            <person name="Graves T."/>
            <person name="Zhou S."/>
            <person name="Teague B."/>
            <person name="Potamousis K."/>
            <person name="Churas C."/>
            <person name="Place M."/>
            <person name="Herschleb J."/>
            <person name="Runnheim R."/>
            <person name="Forrest D."/>
            <person name="Amos-Landgraf J."/>
            <person name="Schwartz D.C."/>
            <person name="Cheng Z."/>
            <person name="Lindblad-Toh K."/>
            <person name="Eichler E.E."/>
            <person name="Ponting C.P."/>
        </authorList>
    </citation>
    <scope>NUCLEOTIDE SEQUENCE [LARGE SCALE GENOMIC DNA]</scope>
    <source>
        <strain>C57BL/6J</strain>
    </source>
</reference>
<reference key="6">
    <citation type="journal article" date="2004" name="Genome Res.">
        <title>The status, quality, and expansion of the NIH full-length cDNA project: the Mammalian Gene Collection (MGC).</title>
        <authorList>
            <consortium name="The MGC Project Team"/>
        </authorList>
    </citation>
    <scope>NUCLEOTIDE SEQUENCE [LARGE SCALE MRNA]</scope>
    <source>
        <strain>FVB/N</strain>
        <tissue>Limb</tissue>
        <tissue>Mammary tumor</tissue>
    </source>
</reference>
<reference key="7">
    <citation type="journal article" date="1997" name="Blood">
        <title>Recombinant soluble interleukin-11 (IL-11) receptor alpha-chain can act as an IL-11 antagonist.</title>
        <authorList>
            <person name="Curtis D.J."/>
            <person name="Hilton D.J."/>
            <person name="Roberts B."/>
            <person name="Murray L."/>
            <person name="Nicola N."/>
            <person name="Begley C.G."/>
        </authorList>
    </citation>
    <scope>PROTEIN SEQUENCE OF 24-38</scope>
    <scope>FUNCTION OF SOLUBLE FORM</scope>
</reference>
<reference key="8">
    <citation type="journal article" date="2011" name="Am. J. Hum. Genet.">
        <title>Inactivation of IL11 signaling causes craniosynostosis, delayed tooth eruption, and supernumerary teeth.</title>
        <authorList>
            <person name="Nieminen P."/>
            <person name="Morgan N.V."/>
            <person name="Fenwick A.L."/>
            <person name="Parmanen S."/>
            <person name="Veistinen L."/>
            <person name="Mikkola M.L."/>
            <person name="van der Spek P.J."/>
            <person name="Giraud A."/>
            <person name="Judd L."/>
            <person name="Arte S."/>
            <person name="Brueton L.A."/>
            <person name="Wall S.A."/>
            <person name="Mathijssen I.M."/>
            <person name="Maher E.R."/>
            <person name="Wilkie A.O."/>
            <person name="Kreiborg S."/>
            <person name="Thesleff I."/>
        </authorList>
    </citation>
    <scope>FUNCTION</scope>
    <scope>DISRUPTION PHENOTYPE</scope>
</reference>
<reference key="9">
    <citation type="journal article" date="2016" name="Cell Rep.">
        <title>Proteolytic Cleavage Governs Interleukin-11 Trans-signaling.</title>
        <authorList>
            <person name="Lokau J."/>
            <person name="Nitz R."/>
            <person name="Agthe M."/>
            <person name="Monhasery N."/>
            <person name="Aparicio-Siegmund S."/>
            <person name="Schumacher N."/>
            <person name="Wolf J."/>
            <person name="Moeller-Hackbarth K."/>
            <person name="Waetzig G.H."/>
            <person name="Groetzinger J."/>
            <person name="Mueller-Newen G."/>
            <person name="Rose-John S."/>
            <person name="Scheller J."/>
            <person name="Garbers C."/>
        </authorList>
    </citation>
    <scope>FUNCTION</scope>
    <scope>PROTEOLYTIC CLEAVAGE</scope>
    <scope>SUBCELLULAR LOCATION</scope>
</reference>